<dbReference type="GO" id="GO:0005576">
    <property type="term" value="C:extracellular region"/>
    <property type="evidence" value="ECO:0007669"/>
    <property type="project" value="UniProtKB-SubCell"/>
</dbReference>
<dbReference type="GO" id="GO:0030414">
    <property type="term" value="F:peptidase inhibitor activity"/>
    <property type="evidence" value="ECO:0007669"/>
    <property type="project" value="UniProtKB-KW"/>
</dbReference>
<dbReference type="GO" id="GO:0090729">
    <property type="term" value="F:toxin activity"/>
    <property type="evidence" value="ECO:0007669"/>
    <property type="project" value="UniProtKB-KW"/>
</dbReference>
<dbReference type="GO" id="GO:0008217">
    <property type="term" value="P:regulation of blood pressure"/>
    <property type="evidence" value="ECO:0007669"/>
    <property type="project" value="UniProtKB-KW"/>
</dbReference>
<proteinExistence type="evidence at protein level"/>
<organism>
    <name type="scientific">Gloydius halys</name>
    <name type="common">Chinese water mocassin</name>
    <name type="synonym">Agkistrodon halys</name>
    <dbReference type="NCBI Taxonomy" id="8714"/>
    <lineage>
        <taxon>Eukaryota</taxon>
        <taxon>Metazoa</taxon>
        <taxon>Chordata</taxon>
        <taxon>Craniata</taxon>
        <taxon>Vertebrata</taxon>
        <taxon>Euteleostomi</taxon>
        <taxon>Lepidosauria</taxon>
        <taxon>Squamata</taxon>
        <taxon>Bifurcata</taxon>
        <taxon>Unidentata</taxon>
        <taxon>Episquamata</taxon>
        <taxon>Toxicofera</taxon>
        <taxon>Serpentes</taxon>
        <taxon>Colubroidea</taxon>
        <taxon>Viperidae</taxon>
        <taxon>Crotalinae</taxon>
        <taxon>Gloydius</taxon>
    </lineage>
</organism>
<evidence type="ECO:0000250" key="1">
    <source>
        <dbReference type="UniProtKB" id="P04562"/>
    </source>
</evidence>
<evidence type="ECO:0000269" key="2">
    <source ref="1"/>
</evidence>
<evidence type="ECO:0000303" key="3">
    <source ref="1"/>
</evidence>
<evidence type="ECO:0000305" key="4"/>
<evidence type="ECO:0000305" key="5">
    <source ref="1"/>
</evidence>
<name>BPP2_GLOHA</name>
<reference evidence="4" key="1">
    <citation type="submission" date="2006-11" db="UniProtKB">
        <title>Molecular analysis of the bioactive components in snake venoms.</title>
        <authorList>
            <person name="Guo C.T."/>
        </authorList>
    </citation>
    <scope>PROTEIN SEQUENCE</scope>
    <scope>FUNCTION</scope>
    <scope>SUBCELLULAR LOCATION</scope>
    <scope>TISSUE SPECIFICITY</scope>
    <source>
        <tissue evidence="2">Venom</tissue>
    </source>
</reference>
<feature type="peptide" id="PRO_0000414617" description="Bradykinin-potentiating peptide 2" evidence="1">
    <location>
        <begin position="1"/>
        <end position="11"/>
    </location>
</feature>
<feature type="modified residue" description="Pyrrolidone carboxylic acid" evidence="1">
    <location>
        <position position="1"/>
    </location>
</feature>
<keyword id="KW-0903">Direct protein sequencing</keyword>
<keyword id="KW-0382">Hypotensive agent</keyword>
<keyword id="KW-0481">Metalloenzyme inhibitor</keyword>
<keyword id="KW-0483">Metalloprotease inhibitor</keyword>
<keyword id="KW-0646">Protease inhibitor</keyword>
<keyword id="KW-0873">Pyrrolidone carboxylic acid</keyword>
<keyword id="KW-0964">Secreted</keyword>
<keyword id="KW-0800">Toxin</keyword>
<protein>
    <recommendedName>
        <fullName evidence="3">Bradykinin-potentiating peptide 2</fullName>
        <shortName evidence="3">AHBPP-2</shortName>
    </recommendedName>
    <alternativeName>
        <fullName evidence="3">Angiotensin-converting enzyme inhibitor 2</fullName>
    </alternativeName>
</protein>
<comment type="function">
    <text evidence="2">This peptide both inhibits the activity of the angiotensin-converting enzyme (ACE) and enhances the action of bradykinin by inhibiting the peptidases that inactivate it. It acts as an indirect hypotensive agent.</text>
</comment>
<comment type="subcellular location">
    <subcellularLocation>
        <location evidence="2">Secreted</location>
    </subcellularLocation>
</comment>
<comment type="tissue specificity">
    <text evidence="5">Expressed by the venom gland.</text>
</comment>
<comment type="similarity">
    <text evidence="4">Belongs to the bradykinin-potentiating peptide family.</text>
</comment>
<accession>P85038</accession>
<sequence>QGRPPRPHIPP</sequence>